<protein>
    <recommendedName>
        <fullName evidence="1">Phosphoribosylformylglycinamidine cyclo-ligase</fullName>
        <ecNumber evidence="1">6.3.3.1</ecNumber>
    </recommendedName>
    <alternativeName>
        <fullName evidence="1">AIR synthase</fullName>
    </alternativeName>
    <alternativeName>
        <fullName evidence="1">AIRS</fullName>
    </alternativeName>
    <alternativeName>
        <fullName evidence="1">Phosphoribosyl-aminoimidazole synthetase</fullName>
    </alternativeName>
</protein>
<keyword id="KW-0067">ATP-binding</keyword>
<keyword id="KW-0963">Cytoplasm</keyword>
<keyword id="KW-0436">Ligase</keyword>
<keyword id="KW-0547">Nucleotide-binding</keyword>
<keyword id="KW-0658">Purine biosynthesis</keyword>
<organism>
    <name type="scientific">Bacillus cereus (strain Q1)</name>
    <dbReference type="NCBI Taxonomy" id="361100"/>
    <lineage>
        <taxon>Bacteria</taxon>
        <taxon>Bacillati</taxon>
        <taxon>Bacillota</taxon>
        <taxon>Bacilli</taxon>
        <taxon>Bacillales</taxon>
        <taxon>Bacillaceae</taxon>
        <taxon>Bacillus</taxon>
        <taxon>Bacillus cereus group</taxon>
    </lineage>
</organism>
<evidence type="ECO:0000255" key="1">
    <source>
        <dbReference type="HAMAP-Rule" id="MF_00741"/>
    </source>
</evidence>
<accession>B9J1K7</accession>
<reference key="1">
    <citation type="journal article" date="2009" name="J. Bacteriol.">
        <title>Complete genome sequence of the extremophilic Bacillus cereus strain Q1 with industrial applications.</title>
        <authorList>
            <person name="Xiong Z."/>
            <person name="Jiang Y."/>
            <person name="Qi D."/>
            <person name="Lu H."/>
            <person name="Yang F."/>
            <person name="Yang J."/>
            <person name="Chen L."/>
            <person name="Sun L."/>
            <person name="Xu X."/>
            <person name="Xue Y."/>
            <person name="Zhu Y."/>
            <person name="Jin Q."/>
        </authorList>
    </citation>
    <scope>NUCLEOTIDE SEQUENCE [LARGE SCALE GENOMIC DNA]</scope>
    <source>
        <strain>Q1</strain>
    </source>
</reference>
<name>PUR5_BACCQ</name>
<comment type="catalytic activity">
    <reaction evidence="1">
        <text>2-formamido-N(1)-(5-O-phospho-beta-D-ribosyl)acetamidine + ATP = 5-amino-1-(5-phospho-beta-D-ribosyl)imidazole + ADP + phosphate + H(+)</text>
        <dbReference type="Rhea" id="RHEA:23032"/>
        <dbReference type="ChEBI" id="CHEBI:15378"/>
        <dbReference type="ChEBI" id="CHEBI:30616"/>
        <dbReference type="ChEBI" id="CHEBI:43474"/>
        <dbReference type="ChEBI" id="CHEBI:137981"/>
        <dbReference type="ChEBI" id="CHEBI:147287"/>
        <dbReference type="ChEBI" id="CHEBI:456216"/>
        <dbReference type="EC" id="6.3.3.1"/>
    </reaction>
</comment>
<comment type="pathway">
    <text evidence="1">Purine metabolism; IMP biosynthesis via de novo pathway; 5-amino-1-(5-phospho-D-ribosyl)imidazole from N(2)-formyl-N(1)-(5-phospho-D-ribosyl)glycinamide: step 2/2.</text>
</comment>
<comment type="subcellular location">
    <subcellularLocation>
        <location evidence="1">Cytoplasm</location>
    </subcellularLocation>
</comment>
<comment type="similarity">
    <text evidence="1">Belongs to the AIR synthase family.</text>
</comment>
<gene>
    <name evidence="1" type="primary">purM</name>
    <name type="ordered locus">BCQ_0348</name>
</gene>
<proteinExistence type="inferred from homology"/>
<sequence>MANAYKQAGVDIEAGYEAVSRMKKHVQTTMRKEVLGGLGGFGGMFDLSKFALEEPVLVSGTDGVGTKLMLAFMADKHDTIGIDAVAMCVNDIVVQGAEPLFFLDYIACGKAEPSKIENIVKGISEGCRQAGCALIGGETAEMPGMYSTEEYDLAGFTVGIVDKKKIVTGEKIEAGHVLIGLASSGIHSNGYSLVRKVLLEDGELSLDRIYGRLELPLGEELLKPTKIYVKPILELLKKYEVYGMAHITGGGFIENIPRMLPEEIGAEIELGSWEIQPIFSLLQEVGKLEEKEMFNIFNMGIGMVVAVKEEDAKDVVRLLEEQGETARIIGRTVQGAGVTFNGGTAL</sequence>
<feature type="chain" id="PRO_1000148267" description="Phosphoribosylformylglycinamidine cyclo-ligase">
    <location>
        <begin position="1"/>
        <end position="346"/>
    </location>
</feature>
<dbReference type="EC" id="6.3.3.1" evidence="1"/>
<dbReference type="EMBL" id="CP000227">
    <property type="protein sequence ID" value="ACM10820.1"/>
    <property type="molecule type" value="Genomic_DNA"/>
</dbReference>
<dbReference type="SMR" id="B9J1K7"/>
<dbReference type="KEGG" id="bcq:BCQ_0348"/>
<dbReference type="HOGENOM" id="CLU_047116_0_0_9"/>
<dbReference type="UniPathway" id="UPA00074">
    <property type="reaction ID" value="UER00129"/>
</dbReference>
<dbReference type="Proteomes" id="UP000000441">
    <property type="component" value="Chromosome"/>
</dbReference>
<dbReference type="GO" id="GO:0005829">
    <property type="term" value="C:cytosol"/>
    <property type="evidence" value="ECO:0007669"/>
    <property type="project" value="TreeGrafter"/>
</dbReference>
<dbReference type="GO" id="GO:0005524">
    <property type="term" value="F:ATP binding"/>
    <property type="evidence" value="ECO:0007669"/>
    <property type="project" value="UniProtKB-KW"/>
</dbReference>
<dbReference type="GO" id="GO:0004637">
    <property type="term" value="F:phosphoribosylamine-glycine ligase activity"/>
    <property type="evidence" value="ECO:0007669"/>
    <property type="project" value="TreeGrafter"/>
</dbReference>
<dbReference type="GO" id="GO:0004641">
    <property type="term" value="F:phosphoribosylformylglycinamidine cyclo-ligase activity"/>
    <property type="evidence" value="ECO:0007669"/>
    <property type="project" value="UniProtKB-UniRule"/>
</dbReference>
<dbReference type="GO" id="GO:0006189">
    <property type="term" value="P:'de novo' IMP biosynthetic process"/>
    <property type="evidence" value="ECO:0007669"/>
    <property type="project" value="UniProtKB-UniRule"/>
</dbReference>
<dbReference type="GO" id="GO:0046084">
    <property type="term" value="P:adenine biosynthetic process"/>
    <property type="evidence" value="ECO:0007669"/>
    <property type="project" value="TreeGrafter"/>
</dbReference>
<dbReference type="CDD" id="cd02196">
    <property type="entry name" value="PurM"/>
    <property type="match status" value="1"/>
</dbReference>
<dbReference type="FunFam" id="3.30.1330.10:FF:000001">
    <property type="entry name" value="Phosphoribosylformylglycinamidine cyclo-ligase"/>
    <property type="match status" value="1"/>
</dbReference>
<dbReference type="FunFam" id="3.90.650.10:FF:000001">
    <property type="entry name" value="Phosphoribosylformylglycinamidine cyclo-ligase"/>
    <property type="match status" value="1"/>
</dbReference>
<dbReference type="Gene3D" id="3.90.650.10">
    <property type="entry name" value="PurM-like C-terminal domain"/>
    <property type="match status" value="1"/>
</dbReference>
<dbReference type="Gene3D" id="3.30.1330.10">
    <property type="entry name" value="PurM-like, N-terminal domain"/>
    <property type="match status" value="1"/>
</dbReference>
<dbReference type="HAMAP" id="MF_00741">
    <property type="entry name" value="AIRS"/>
    <property type="match status" value="1"/>
</dbReference>
<dbReference type="InterPro" id="IPR010918">
    <property type="entry name" value="PurM-like_C_dom"/>
</dbReference>
<dbReference type="InterPro" id="IPR036676">
    <property type="entry name" value="PurM-like_C_sf"/>
</dbReference>
<dbReference type="InterPro" id="IPR016188">
    <property type="entry name" value="PurM-like_N"/>
</dbReference>
<dbReference type="InterPro" id="IPR036921">
    <property type="entry name" value="PurM-like_N_sf"/>
</dbReference>
<dbReference type="InterPro" id="IPR004733">
    <property type="entry name" value="PurM_cligase"/>
</dbReference>
<dbReference type="NCBIfam" id="TIGR00878">
    <property type="entry name" value="purM"/>
    <property type="match status" value="1"/>
</dbReference>
<dbReference type="PANTHER" id="PTHR10520:SF12">
    <property type="entry name" value="TRIFUNCTIONAL PURINE BIOSYNTHETIC PROTEIN ADENOSINE-3"/>
    <property type="match status" value="1"/>
</dbReference>
<dbReference type="PANTHER" id="PTHR10520">
    <property type="entry name" value="TRIFUNCTIONAL PURINE BIOSYNTHETIC PROTEIN ADENOSINE-3-RELATED"/>
    <property type="match status" value="1"/>
</dbReference>
<dbReference type="Pfam" id="PF00586">
    <property type="entry name" value="AIRS"/>
    <property type="match status" value="1"/>
</dbReference>
<dbReference type="Pfam" id="PF02769">
    <property type="entry name" value="AIRS_C"/>
    <property type="match status" value="1"/>
</dbReference>
<dbReference type="SUPFAM" id="SSF56042">
    <property type="entry name" value="PurM C-terminal domain-like"/>
    <property type="match status" value="1"/>
</dbReference>
<dbReference type="SUPFAM" id="SSF55326">
    <property type="entry name" value="PurM N-terminal domain-like"/>
    <property type="match status" value="1"/>
</dbReference>